<organism>
    <name type="scientific">Salmonella abortus-equi</name>
    <dbReference type="NCBI Taxonomy" id="607"/>
    <lineage>
        <taxon>Bacteria</taxon>
        <taxon>Pseudomonadati</taxon>
        <taxon>Pseudomonadota</taxon>
        <taxon>Gammaproteobacteria</taxon>
        <taxon>Enterobacterales</taxon>
        <taxon>Enterobacteriaceae</taxon>
        <taxon>Salmonella</taxon>
    </lineage>
</organism>
<reference key="1">
    <citation type="journal article" date="1993" name="J. Bacteriol.">
        <title>Conversion of the Salmonella phase 1 flagellin gene fliC to the phase 2 gene fljB on the Escherichia coli K-12 chromosome.</title>
        <authorList>
            <person name="Okazaki N."/>
            <person name="Matsuo S."/>
            <person name="Saito K."/>
            <person name="Tominaga A."/>
            <person name="Enomoto M."/>
        </authorList>
    </citation>
    <scope>NUCLEOTIDE SEQUENCE [GENOMIC DNA]</scope>
</reference>
<reference key="2">
    <citation type="journal article" date="1993" name="Mol. Gen. Genet.">
        <title>Nucleotide sequence and regulated expression of the Salmonella fljA gene encoding a repressor of the phase 1 flagellin gene.</title>
        <authorList>
            <person name="Hanafusa T."/>
            <person name="Saito K."/>
            <person name="Tominaga A."/>
            <person name="Enomoto M."/>
        </authorList>
    </citation>
    <scope>NUCLEOTIDE SEQUENCE [GENOMIC DNA] OF 478-501</scope>
</reference>
<accession>P52615</accession>
<protein>
    <recommendedName>
        <fullName>Phase 2 flagellin</fullName>
    </recommendedName>
</protein>
<comment type="function">
    <text>Flagellin is the subunit protein which polymerizes to form the filaments of bacterial flagella.</text>
</comment>
<comment type="subcellular location">
    <subcellularLocation>
        <location>Secreted</location>
    </subcellularLocation>
    <subcellularLocation>
        <location>Bacterial flagellum</location>
    </subcellularLocation>
</comment>
<comment type="miscellaneous">
    <text>Individual Salmonella serotypes usually alternate between the production of 2 antigenic forms of flagella, termed phase 1 and phase 2, each specified by separate structural genes.</text>
</comment>
<comment type="similarity">
    <text evidence="2">Belongs to the bacterial flagellin family.</text>
</comment>
<name>FLJB_SALAE</name>
<gene>
    <name type="primary">fljB</name>
</gene>
<keyword id="KW-0975">Bacterial flagellum</keyword>
<keyword id="KW-0964">Secreted</keyword>
<proteinExistence type="inferred from homology"/>
<feature type="initiator methionine" description="Removed" evidence="1">
    <location>
        <position position="1"/>
    </location>
</feature>
<feature type="chain" id="PRO_0000182579" description="Phase 2 flagellin">
    <location>
        <begin position="2"/>
        <end position="501"/>
    </location>
</feature>
<feature type="sequence conflict" description="In Ref. 2; BAA02072." evidence="2" ref="2">
    <original>Q</original>
    <variation>L</variation>
    <location>
        <position position="494"/>
    </location>
</feature>
<dbReference type="EMBL" id="D13690">
    <property type="protein sequence ID" value="BAA02848.1"/>
    <property type="molecule type" value="Genomic_DNA"/>
</dbReference>
<dbReference type="EMBL" id="D12510">
    <property type="protein sequence ID" value="BAA02072.1"/>
    <property type="molecule type" value="Genomic_DNA"/>
</dbReference>
<dbReference type="PIR" id="S30923">
    <property type="entry name" value="S30923"/>
</dbReference>
<dbReference type="SMR" id="P52615"/>
<dbReference type="GO" id="GO:0009288">
    <property type="term" value="C:bacterial-type flagellum"/>
    <property type="evidence" value="ECO:0007669"/>
    <property type="project" value="UniProtKB-SubCell"/>
</dbReference>
<dbReference type="GO" id="GO:0005576">
    <property type="term" value="C:extracellular region"/>
    <property type="evidence" value="ECO:0007669"/>
    <property type="project" value="UniProtKB-SubCell"/>
</dbReference>
<dbReference type="GO" id="GO:0005198">
    <property type="term" value="F:structural molecule activity"/>
    <property type="evidence" value="ECO:0007669"/>
    <property type="project" value="InterPro"/>
</dbReference>
<dbReference type="Gene3D" id="6.10.280.190">
    <property type="match status" value="1"/>
</dbReference>
<dbReference type="Gene3D" id="2.30.220.10">
    <property type="entry name" value="f41 fragment of flagellin, C-terminal domain"/>
    <property type="match status" value="1"/>
</dbReference>
<dbReference type="Gene3D" id="2.170.280.10">
    <property type="entry name" value="f41 fragment of flagellin, middle domain"/>
    <property type="match status" value="1"/>
</dbReference>
<dbReference type="Gene3D" id="1.20.1330.10">
    <property type="entry name" value="f41 fragment of flagellin, N-terminal domain"/>
    <property type="match status" value="1"/>
</dbReference>
<dbReference type="Gene3D" id="6.10.10.10">
    <property type="entry name" value="Flagellar export chaperone, C-terminal domain"/>
    <property type="match status" value="1"/>
</dbReference>
<dbReference type="InterPro" id="IPR001492">
    <property type="entry name" value="Flagellin"/>
</dbReference>
<dbReference type="InterPro" id="IPR046358">
    <property type="entry name" value="Flagellin_C"/>
</dbReference>
<dbReference type="InterPro" id="IPR042187">
    <property type="entry name" value="Flagellin_C_sub2"/>
</dbReference>
<dbReference type="InterPro" id="IPR014981">
    <property type="entry name" value="Flagellin_D3"/>
</dbReference>
<dbReference type="InterPro" id="IPR001029">
    <property type="entry name" value="Flagellin_N"/>
</dbReference>
<dbReference type="InterPro" id="IPR049365">
    <property type="entry name" value="FLIC_barrel"/>
</dbReference>
<dbReference type="NCBIfam" id="NF005953">
    <property type="entry name" value="PRK08026.1"/>
    <property type="match status" value="1"/>
</dbReference>
<dbReference type="PANTHER" id="PTHR42792">
    <property type="entry name" value="FLAGELLIN"/>
    <property type="match status" value="1"/>
</dbReference>
<dbReference type="PANTHER" id="PTHR42792:SF2">
    <property type="entry name" value="FLAGELLIN"/>
    <property type="match status" value="1"/>
</dbReference>
<dbReference type="Pfam" id="PF00700">
    <property type="entry name" value="Flagellin_C"/>
    <property type="match status" value="1"/>
</dbReference>
<dbReference type="Pfam" id="PF08884">
    <property type="entry name" value="Flagellin_D3"/>
    <property type="match status" value="1"/>
</dbReference>
<dbReference type="Pfam" id="PF00669">
    <property type="entry name" value="Flagellin_N"/>
    <property type="match status" value="1"/>
</dbReference>
<dbReference type="Pfam" id="PF21504">
    <property type="entry name" value="FLIC_barrel"/>
    <property type="match status" value="1"/>
</dbReference>
<dbReference type="PRINTS" id="PR00207">
    <property type="entry name" value="FLAGELLIN"/>
</dbReference>
<dbReference type="SUPFAM" id="SSF64518">
    <property type="entry name" value="Phase 1 flagellin"/>
    <property type="match status" value="1"/>
</dbReference>
<evidence type="ECO:0000250" key="1"/>
<evidence type="ECO:0000305" key="2"/>
<sequence length="501" mass="52058">MAQVINTNSLSLLTQNNLNKSQSALGTAIERLSSGLRINSAKDDAAGQAIANRFTANIKGLTQASRNANDGISIAHTTEGALNEINNNLQRVRELAVQSANSTNSQSDLDSIQAEITQRLNEIDRVSGQTQFNGVKVLAQDNTLTIQVGANDGETIDIDLKQINSQTLGLDSLNVQKAYDVSATDVISSTYSDGTQALTAPTATDIKAALGNPTVTGDTLTAAVSFKDGKYYATVSGYTDAGDTAKNGKYEVTVDSATGAVSFGATPTKSTVTGDTAVTKVQVNAPVAADAATKKALQDGGVSSADASAATLVKMSYTDKNGKTIEGGYALKAGDKYYAADYDEATGAIKAKTTSYTAADGTTKTAANQLGGVDGKTEVVTIDGKTYNASKAAGHDFKAQPELAEAAAKTTENPLQKIDAALAQVDALRSDLGAVQNRFNSAITNLGNTVNNLSEARSRIEDSDYATEVSNMSRAQILQQAGTSVLAQANQVPQNVLSLLR</sequence>